<comment type="function">
    <text evidence="1">Single strand-specific metallo-endoribonuclease involved in late-stage 70S ribosome quality control and in maturation of the 3' terminus of the 16S rRNA.</text>
</comment>
<comment type="cofactor">
    <cofactor evidence="1">
        <name>Zn(2+)</name>
        <dbReference type="ChEBI" id="CHEBI:29105"/>
    </cofactor>
    <text evidence="1">Binds 1 zinc ion.</text>
</comment>
<comment type="subcellular location">
    <subcellularLocation>
        <location evidence="1">Cytoplasm</location>
    </subcellularLocation>
</comment>
<comment type="similarity">
    <text evidence="1">Belongs to the endoribonuclease YbeY family.</text>
</comment>
<organism>
    <name type="scientific">Streptococcus gordonii (strain Challis / ATCC 35105 / BCRC 15272 / CH1 / DL1 / V288)</name>
    <dbReference type="NCBI Taxonomy" id="467705"/>
    <lineage>
        <taxon>Bacteria</taxon>
        <taxon>Bacillati</taxon>
        <taxon>Bacillota</taxon>
        <taxon>Bacilli</taxon>
        <taxon>Lactobacillales</taxon>
        <taxon>Streptococcaceae</taxon>
        <taxon>Streptococcus</taxon>
    </lineage>
</organism>
<sequence>MYIEIVDETGLVSEEIIKQTQDILEFAAQKTGKEKKEMAVTFVTNERSHELNLEYRDTDRPTDVISLEYKPELDIAVDEEDLLNHPELAEMLDDFDAYIGELFISVDKAREQAEEYGHSFKREMGFLAVHGFLHINGYDHYTPEEEAEMFGLQEEILTAYGLTRE</sequence>
<reference key="1">
    <citation type="journal article" date="2007" name="J. Bacteriol.">
        <title>Genome-wide transcriptional changes in Streptococcus gordonii in response to competence signaling peptide.</title>
        <authorList>
            <person name="Vickerman M.M."/>
            <person name="Iobst S."/>
            <person name="Jesionowski A.M."/>
            <person name="Gill S.R."/>
        </authorList>
    </citation>
    <scope>NUCLEOTIDE SEQUENCE [LARGE SCALE GENOMIC DNA]</scope>
    <source>
        <strain>Challis / ATCC 35105 / BCRC 15272 / CH1 / DL1 / V288</strain>
    </source>
</reference>
<accession>A8AW52</accession>
<evidence type="ECO:0000255" key="1">
    <source>
        <dbReference type="HAMAP-Rule" id="MF_00009"/>
    </source>
</evidence>
<protein>
    <recommendedName>
        <fullName evidence="1">Endoribonuclease YbeY</fullName>
        <ecNumber evidence="1">3.1.-.-</ecNumber>
    </recommendedName>
</protein>
<dbReference type="EC" id="3.1.-.-" evidence="1"/>
<dbReference type="EMBL" id="CP000725">
    <property type="protein sequence ID" value="ABV10436.1"/>
    <property type="molecule type" value="Genomic_DNA"/>
</dbReference>
<dbReference type="RefSeq" id="WP_012000180.1">
    <property type="nucleotide sequence ID" value="NC_009785.1"/>
</dbReference>
<dbReference type="SMR" id="A8AW52"/>
<dbReference type="STRING" id="467705.SGO_0711"/>
<dbReference type="KEGG" id="sgo:SGO_0711"/>
<dbReference type="eggNOG" id="COG0319">
    <property type="taxonomic scope" value="Bacteria"/>
</dbReference>
<dbReference type="HOGENOM" id="CLU_106710_3_0_9"/>
<dbReference type="Proteomes" id="UP000001131">
    <property type="component" value="Chromosome"/>
</dbReference>
<dbReference type="GO" id="GO:0005737">
    <property type="term" value="C:cytoplasm"/>
    <property type="evidence" value="ECO:0007669"/>
    <property type="project" value="UniProtKB-SubCell"/>
</dbReference>
<dbReference type="GO" id="GO:0004222">
    <property type="term" value="F:metalloendopeptidase activity"/>
    <property type="evidence" value="ECO:0007669"/>
    <property type="project" value="InterPro"/>
</dbReference>
<dbReference type="GO" id="GO:0004521">
    <property type="term" value="F:RNA endonuclease activity"/>
    <property type="evidence" value="ECO:0007669"/>
    <property type="project" value="UniProtKB-UniRule"/>
</dbReference>
<dbReference type="GO" id="GO:0008270">
    <property type="term" value="F:zinc ion binding"/>
    <property type="evidence" value="ECO:0007669"/>
    <property type="project" value="UniProtKB-UniRule"/>
</dbReference>
<dbReference type="GO" id="GO:0006364">
    <property type="term" value="P:rRNA processing"/>
    <property type="evidence" value="ECO:0007669"/>
    <property type="project" value="UniProtKB-UniRule"/>
</dbReference>
<dbReference type="Gene3D" id="3.40.390.30">
    <property type="entry name" value="Metalloproteases ('zincins'), catalytic domain"/>
    <property type="match status" value="1"/>
</dbReference>
<dbReference type="HAMAP" id="MF_00009">
    <property type="entry name" value="Endoribonucl_YbeY"/>
    <property type="match status" value="1"/>
</dbReference>
<dbReference type="InterPro" id="IPR023091">
    <property type="entry name" value="MetalPrtase_cat_dom_sf_prd"/>
</dbReference>
<dbReference type="InterPro" id="IPR002036">
    <property type="entry name" value="YbeY"/>
</dbReference>
<dbReference type="InterPro" id="IPR020549">
    <property type="entry name" value="YbeY_CS"/>
</dbReference>
<dbReference type="NCBIfam" id="TIGR00043">
    <property type="entry name" value="rRNA maturation RNase YbeY"/>
    <property type="match status" value="1"/>
</dbReference>
<dbReference type="PANTHER" id="PTHR46986">
    <property type="entry name" value="ENDORIBONUCLEASE YBEY, CHLOROPLASTIC"/>
    <property type="match status" value="1"/>
</dbReference>
<dbReference type="PANTHER" id="PTHR46986:SF1">
    <property type="entry name" value="ENDORIBONUCLEASE YBEY, CHLOROPLASTIC"/>
    <property type="match status" value="1"/>
</dbReference>
<dbReference type="Pfam" id="PF02130">
    <property type="entry name" value="YbeY"/>
    <property type="match status" value="1"/>
</dbReference>
<dbReference type="SUPFAM" id="SSF55486">
    <property type="entry name" value="Metalloproteases ('zincins'), catalytic domain"/>
    <property type="match status" value="1"/>
</dbReference>
<dbReference type="PROSITE" id="PS01306">
    <property type="entry name" value="UPF0054"/>
    <property type="match status" value="1"/>
</dbReference>
<feature type="chain" id="PRO_1000073923" description="Endoribonuclease YbeY">
    <location>
        <begin position="1"/>
        <end position="165"/>
    </location>
</feature>
<feature type="binding site" evidence="1">
    <location>
        <position position="130"/>
    </location>
    <ligand>
        <name>Zn(2+)</name>
        <dbReference type="ChEBI" id="CHEBI:29105"/>
        <note>catalytic</note>
    </ligand>
</feature>
<feature type="binding site" evidence="1">
    <location>
        <position position="134"/>
    </location>
    <ligand>
        <name>Zn(2+)</name>
        <dbReference type="ChEBI" id="CHEBI:29105"/>
        <note>catalytic</note>
    </ligand>
</feature>
<feature type="binding site" evidence="1">
    <location>
        <position position="140"/>
    </location>
    <ligand>
        <name>Zn(2+)</name>
        <dbReference type="ChEBI" id="CHEBI:29105"/>
        <note>catalytic</note>
    </ligand>
</feature>
<proteinExistence type="inferred from homology"/>
<gene>
    <name evidence="1" type="primary">ybeY</name>
    <name type="ordered locus">SGO_0711</name>
</gene>
<name>YBEY_STRGC</name>
<keyword id="KW-0963">Cytoplasm</keyword>
<keyword id="KW-0255">Endonuclease</keyword>
<keyword id="KW-0378">Hydrolase</keyword>
<keyword id="KW-0479">Metal-binding</keyword>
<keyword id="KW-0540">Nuclease</keyword>
<keyword id="KW-1185">Reference proteome</keyword>
<keyword id="KW-0690">Ribosome biogenesis</keyword>
<keyword id="KW-0698">rRNA processing</keyword>
<keyword id="KW-0862">Zinc</keyword>